<evidence type="ECO:0000250" key="1"/>
<evidence type="ECO:0000255" key="2"/>
<evidence type="ECO:0000255" key="3">
    <source>
        <dbReference type="PROSITE-ProRule" id="PRU00336"/>
    </source>
</evidence>
<evidence type="ECO:0000256" key="4">
    <source>
        <dbReference type="SAM" id="MobiDB-lite"/>
    </source>
</evidence>
<evidence type="ECO:0000269" key="5">
    <source>
    </source>
</evidence>
<evidence type="ECO:0000305" key="6"/>
<sequence length="409" mass="47706">MSLIAIERVLCGWPKICRKLIVTSRSLTSGLRRALVKQPRKGGDVGKPGMELGRCSCFGLRVNLSNASVVYVGHRRYSTYEKTSTQILTKLFPQTSEESNDEESRERRKLEEEEEQKELERAFRRMKLGFGLFGIGSMLFSFWAIYFYGRPSLDEHGNEVIDEFSCLPQMQQLMWRTWKSVNRFQRFFKEPSRKKLLPDPLQPPYVQPPYTLVLEIKDVLVHPDWTYETGWRFKKRPGVDVFLKECAKYFEIVVYTAEQGVTVFPLVDALDPNGCIMYRLVRDSTHFDGGHHVKNLDNLNRDLKRVVVVDWDRNSTKFHPSNSFSIPRWSGNDNDTTLFELTSFLSVLGTSEIDDVREVLQYYNQFSDSLSQFRENQRKLGELMHAEEVEKTSKSRPVVKNWTRGFINH</sequence>
<reference key="1">
    <citation type="journal article" date="2000" name="Science">
        <title>The genome sequence of Drosophila melanogaster.</title>
        <authorList>
            <person name="Adams M.D."/>
            <person name="Celniker S.E."/>
            <person name="Holt R.A."/>
            <person name="Evans C.A."/>
            <person name="Gocayne J.D."/>
            <person name="Amanatides P.G."/>
            <person name="Scherer S.E."/>
            <person name="Li P.W."/>
            <person name="Hoskins R.A."/>
            <person name="Galle R.F."/>
            <person name="George R.A."/>
            <person name="Lewis S.E."/>
            <person name="Richards S."/>
            <person name="Ashburner M."/>
            <person name="Henderson S.N."/>
            <person name="Sutton G.G."/>
            <person name="Wortman J.R."/>
            <person name="Yandell M.D."/>
            <person name="Zhang Q."/>
            <person name="Chen L.X."/>
            <person name="Brandon R.C."/>
            <person name="Rogers Y.-H.C."/>
            <person name="Blazej R.G."/>
            <person name="Champe M."/>
            <person name="Pfeiffer B.D."/>
            <person name="Wan K.H."/>
            <person name="Doyle C."/>
            <person name="Baxter E.G."/>
            <person name="Helt G."/>
            <person name="Nelson C.R."/>
            <person name="Miklos G.L.G."/>
            <person name="Abril J.F."/>
            <person name="Agbayani A."/>
            <person name="An H.-J."/>
            <person name="Andrews-Pfannkoch C."/>
            <person name="Baldwin D."/>
            <person name="Ballew R.M."/>
            <person name="Basu A."/>
            <person name="Baxendale J."/>
            <person name="Bayraktaroglu L."/>
            <person name="Beasley E.M."/>
            <person name="Beeson K.Y."/>
            <person name="Benos P.V."/>
            <person name="Berman B.P."/>
            <person name="Bhandari D."/>
            <person name="Bolshakov S."/>
            <person name="Borkova D."/>
            <person name="Botchan M.R."/>
            <person name="Bouck J."/>
            <person name="Brokstein P."/>
            <person name="Brottier P."/>
            <person name="Burtis K.C."/>
            <person name="Busam D.A."/>
            <person name="Butler H."/>
            <person name="Cadieu E."/>
            <person name="Center A."/>
            <person name="Chandra I."/>
            <person name="Cherry J.M."/>
            <person name="Cawley S."/>
            <person name="Dahlke C."/>
            <person name="Davenport L.B."/>
            <person name="Davies P."/>
            <person name="de Pablos B."/>
            <person name="Delcher A."/>
            <person name="Deng Z."/>
            <person name="Mays A.D."/>
            <person name="Dew I."/>
            <person name="Dietz S.M."/>
            <person name="Dodson K."/>
            <person name="Doup L.E."/>
            <person name="Downes M."/>
            <person name="Dugan-Rocha S."/>
            <person name="Dunkov B.C."/>
            <person name="Dunn P."/>
            <person name="Durbin K.J."/>
            <person name="Evangelista C.C."/>
            <person name="Ferraz C."/>
            <person name="Ferriera S."/>
            <person name="Fleischmann W."/>
            <person name="Fosler C."/>
            <person name="Gabrielian A.E."/>
            <person name="Garg N.S."/>
            <person name="Gelbart W.M."/>
            <person name="Glasser K."/>
            <person name="Glodek A."/>
            <person name="Gong F."/>
            <person name="Gorrell J.H."/>
            <person name="Gu Z."/>
            <person name="Guan P."/>
            <person name="Harris M."/>
            <person name="Harris N.L."/>
            <person name="Harvey D.A."/>
            <person name="Heiman T.J."/>
            <person name="Hernandez J.R."/>
            <person name="Houck J."/>
            <person name="Hostin D."/>
            <person name="Houston K.A."/>
            <person name="Howland T.J."/>
            <person name="Wei M.-H."/>
            <person name="Ibegwam C."/>
            <person name="Jalali M."/>
            <person name="Kalush F."/>
            <person name="Karpen G.H."/>
            <person name="Ke Z."/>
            <person name="Kennison J.A."/>
            <person name="Ketchum K.A."/>
            <person name="Kimmel B.E."/>
            <person name="Kodira C.D."/>
            <person name="Kraft C.L."/>
            <person name="Kravitz S."/>
            <person name="Kulp D."/>
            <person name="Lai Z."/>
            <person name="Lasko P."/>
            <person name="Lei Y."/>
            <person name="Levitsky A.A."/>
            <person name="Li J.H."/>
            <person name="Li Z."/>
            <person name="Liang Y."/>
            <person name="Lin X."/>
            <person name="Liu X."/>
            <person name="Mattei B."/>
            <person name="McIntosh T.C."/>
            <person name="McLeod M.P."/>
            <person name="McPherson D."/>
            <person name="Merkulov G."/>
            <person name="Milshina N.V."/>
            <person name="Mobarry C."/>
            <person name="Morris J."/>
            <person name="Moshrefi A."/>
            <person name="Mount S.M."/>
            <person name="Moy M."/>
            <person name="Murphy B."/>
            <person name="Murphy L."/>
            <person name="Muzny D.M."/>
            <person name="Nelson D.L."/>
            <person name="Nelson D.R."/>
            <person name="Nelson K.A."/>
            <person name="Nixon K."/>
            <person name="Nusskern D.R."/>
            <person name="Pacleb J.M."/>
            <person name="Palazzolo M."/>
            <person name="Pittman G.S."/>
            <person name="Pan S."/>
            <person name="Pollard J."/>
            <person name="Puri V."/>
            <person name="Reese M.G."/>
            <person name="Reinert K."/>
            <person name="Remington K."/>
            <person name="Saunders R.D.C."/>
            <person name="Scheeler F."/>
            <person name="Shen H."/>
            <person name="Shue B.C."/>
            <person name="Siden-Kiamos I."/>
            <person name="Simpson M."/>
            <person name="Skupski M.P."/>
            <person name="Smith T.J."/>
            <person name="Spier E."/>
            <person name="Spradling A.C."/>
            <person name="Stapleton M."/>
            <person name="Strong R."/>
            <person name="Sun E."/>
            <person name="Svirskas R."/>
            <person name="Tector C."/>
            <person name="Turner R."/>
            <person name="Venter E."/>
            <person name="Wang A.H."/>
            <person name="Wang X."/>
            <person name="Wang Z.-Y."/>
            <person name="Wassarman D.A."/>
            <person name="Weinstock G.M."/>
            <person name="Weissenbach J."/>
            <person name="Williams S.M."/>
            <person name="Woodage T."/>
            <person name="Worley K.C."/>
            <person name="Wu D."/>
            <person name="Yang S."/>
            <person name="Yao Q.A."/>
            <person name="Ye J."/>
            <person name="Yeh R.-F."/>
            <person name="Zaveri J.S."/>
            <person name="Zhan M."/>
            <person name="Zhang G."/>
            <person name="Zhao Q."/>
            <person name="Zheng L."/>
            <person name="Zheng X.H."/>
            <person name="Zhong F.N."/>
            <person name="Zhong W."/>
            <person name="Zhou X."/>
            <person name="Zhu S.C."/>
            <person name="Zhu X."/>
            <person name="Smith H.O."/>
            <person name="Gibbs R.A."/>
            <person name="Myers E.W."/>
            <person name="Rubin G.M."/>
            <person name="Venter J.C."/>
        </authorList>
    </citation>
    <scope>NUCLEOTIDE SEQUENCE [LARGE SCALE GENOMIC DNA]</scope>
    <source>
        <strain>Berkeley</strain>
    </source>
</reference>
<reference key="2">
    <citation type="journal article" date="2002" name="Genome Biol.">
        <title>Annotation of the Drosophila melanogaster euchromatic genome: a systematic review.</title>
        <authorList>
            <person name="Misra S."/>
            <person name="Crosby M.A."/>
            <person name="Mungall C.J."/>
            <person name="Matthews B.B."/>
            <person name="Campbell K.S."/>
            <person name="Hradecky P."/>
            <person name="Huang Y."/>
            <person name="Kaminker J.S."/>
            <person name="Millburn G.H."/>
            <person name="Prochnik S.E."/>
            <person name="Smith C.D."/>
            <person name="Tupy J.L."/>
            <person name="Whitfield E.J."/>
            <person name="Bayraktaroglu L."/>
            <person name="Berman B.P."/>
            <person name="Bettencourt B.R."/>
            <person name="Celniker S.E."/>
            <person name="de Grey A.D.N.J."/>
            <person name="Drysdale R.A."/>
            <person name="Harris N.L."/>
            <person name="Richter J."/>
            <person name="Russo S."/>
            <person name="Schroeder A.J."/>
            <person name="Shu S.Q."/>
            <person name="Stapleton M."/>
            <person name="Yamada C."/>
            <person name="Ashburner M."/>
            <person name="Gelbart W.M."/>
            <person name="Rubin G.M."/>
            <person name="Lewis S.E."/>
        </authorList>
    </citation>
    <scope>GENOME REANNOTATION</scope>
    <source>
        <strain>Berkeley</strain>
    </source>
</reference>
<reference key="3">
    <citation type="submission" date="2007-11" db="EMBL/GenBank/DDBJ databases">
        <authorList>
            <person name="Stapleton M."/>
            <person name="Carlson J.W."/>
            <person name="Frise E."/>
            <person name="Kapadia B."/>
            <person name="Park S."/>
            <person name="Wan K.H."/>
            <person name="Yu C."/>
            <person name="Celniker S.E."/>
        </authorList>
    </citation>
    <scope>NUCLEOTIDE SEQUENCE [LARGE SCALE MRNA]</scope>
    <source>
        <strain>Berkeley</strain>
    </source>
</reference>
<reference key="4">
    <citation type="journal article" date="2002" name="Genome Biol.">
        <title>A Drosophila full-length cDNA resource.</title>
        <authorList>
            <person name="Stapleton M."/>
            <person name="Carlson J.W."/>
            <person name="Brokstein P."/>
            <person name="Yu C."/>
            <person name="Champe M."/>
            <person name="George R.A."/>
            <person name="Guarin H."/>
            <person name="Kronmiller B."/>
            <person name="Pacleb J.M."/>
            <person name="Park S."/>
            <person name="Wan K.H."/>
            <person name="Rubin G.M."/>
            <person name="Celniker S.E."/>
        </authorList>
    </citation>
    <scope>NUCLEOTIDE SEQUENCE [LARGE SCALE MRNA] OF 97-409</scope>
    <source>
        <strain>Berkeley</strain>
        <tissue>Testis</tissue>
    </source>
</reference>
<reference key="5">
    <citation type="journal article" date="2007" name="Genetics">
        <title>Involvement of the mitochondrial protein translocator component tim50 in growth, cell proliferation and the modulation of respiration in Drosophila.</title>
        <authorList>
            <person name="Sugiyama S."/>
            <person name="Moritoh S."/>
            <person name="Furukawa Y."/>
            <person name="Mizuno T."/>
            <person name="Lim Y.M."/>
            <person name="Tsuda L."/>
            <person name="Nishida Y."/>
        </authorList>
    </citation>
    <scope>IDENTIFICATION</scope>
    <scope>TISSUE SPECIFICITY</scope>
</reference>
<gene>
    <name type="primary">ttm2</name>
    <name type="ORF">CG12313</name>
</gene>
<feature type="transit peptide" description="Mitochondrion" evidence="2">
    <location>
        <begin position="1"/>
        <end position="42"/>
    </location>
</feature>
<feature type="chain" id="PRO_0000043122" description="Mitochondrial import inner membrane translocase subunit TIM50-B">
    <location>
        <begin position="43"/>
        <end position="409"/>
    </location>
</feature>
<feature type="topological domain" description="Mitochondrial matrix" evidence="2">
    <location>
        <begin position="43"/>
        <end position="127"/>
    </location>
</feature>
<feature type="transmembrane region" description="Helical" evidence="2">
    <location>
        <begin position="128"/>
        <end position="148"/>
    </location>
</feature>
<feature type="topological domain" description="Mitochondrial intermembrane" evidence="2">
    <location>
        <begin position="149"/>
        <end position="409"/>
    </location>
</feature>
<feature type="domain" description="FCP1 homology" evidence="3">
    <location>
        <begin position="205"/>
        <end position="348"/>
    </location>
</feature>
<feature type="region of interest" description="Disordered" evidence="4">
    <location>
        <begin position="93"/>
        <end position="114"/>
    </location>
</feature>
<feature type="compositionally biased region" description="Basic and acidic residues" evidence="4">
    <location>
        <begin position="102"/>
        <end position="111"/>
    </location>
</feature>
<comment type="function">
    <text evidence="1">Essential component of the TIM23 complex, a complex that mediates the translocation of transit peptide-containing proteins across the mitochondrial inner membrane.</text>
</comment>
<comment type="subunit">
    <text evidence="1">Component of the TIM23 complex at least composed of Tim23, Tim17 (Tim17a1, Tim17a2 or Tim17b1) and a Tim50.</text>
</comment>
<comment type="subcellular location">
    <subcellularLocation>
        <location evidence="1">Mitochondrion inner membrane</location>
        <topology evidence="1">Single-pass membrane protein</topology>
    </subcellularLocation>
</comment>
<comment type="tissue specificity">
    <text evidence="5">Exclusively expressed in the testis.</text>
</comment>
<comment type="similarity">
    <text evidence="6">Belongs to the TIM50 family.</text>
</comment>
<comment type="sequence caution" evidence="6">
    <conflict type="miscellaneous discrepancy">
        <sequence resource="EMBL-CDS" id="AAL90033"/>
    </conflict>
    <text>Deletion of several nucleotides that changes the frame.</text>
</comment>
<name>TI50B_DROME</name>
<keyword id="KW-0472">Membrane</keyword>
<keyword id="KW-0496">Mitochondrion</keyword>
<keyword id="KW-0999">Mitochondrion inner membrane</keyword>
<keyword id="KW-0653">Protein transport</keyword>
<keyword id="KW-1185">Reference proteome</keyword>
<keyword id="KW-0809">Transit peptide</keyword>
<keyword id="KW-0811">Translocation</keyword>
<keyword id="KW-0812">Transmembrane</keyword>
<keyword id="KW-1133">Transmembrane helix</keyword>
<keyword id="KW-0813">Transport</keyword>
<accession>Q9W0S3</accession>
<accession>A8WHK1</accession>
<accession>Q8T493</accession>
<proteinExistence type="evidence at transcript level"/>
<protein>
    <recommendedName>
        <fullName>Mitochondrial import inner membrane translocase subunit TIM50-B</fullName>
    </recommendedName>
    <alternativeName>
        <fullName>Tiny tim 2</fullName>
    </alternativeName>
</protein>
<dbReference type="EMBL" id="AE014296">
    <property type="protein sequence ID" value="AAF47370.1"/>
    <property type="molecule type" value="Genomic_DNA"/>
</dbReference>
<dbReference type="EMBL" id="BT031147">
    <property type="protein sequence ID" value="ABX00769.1"/>
    <property type="molecule type" value="mRNA"/>
</dbReference>
<dbReference type="EMBL" id="AY089295">
    <property type="protein sequence ID" value="AAL90033.1"/>
    <property type="status" value="ALT_SEQ"/>
    <property type="molecule type" value="mRNA"/>
</dbReference>
<dbReference type="RefSeq" id="NP_612023.1">
    <property type="nucleotide sequence ID" value="NM_138179.3"/>
</dbReference>
<dbReference type="SMR" id="Q9W0S3"/>
<dbReference type="FunCoup" id="Q9W0S3">
    <property type="interactions" value="1100"/>
</dbReference>
<dbReference type="IntAct" id="Q9W0S3">
    <property type="interactions" value="2"/>
</dbReference>
<dbReference type="STRING" id="7227.FBpp0072407"/>
<dbReference type="PaxDb" id="7227-FBpp0072407"/>
<dbReference type="DNASU" id="38049"/>
<dbReference type="EnsemblMetazoa" id="FBtr0072507">
    <property type="protein sequence ID" value="FBpp0072407"/>
    <property type="gene ID" value="FBgn0035124"/>
</dbReference>
<dbReference type="GeneID" id="38049"/>
<dbReference type="KEGG" id="dme:Dmel_CG12313"/>
<dbReference type="AGR" id="FB:FBgn0035124"/>
<dbReference type="CTD" id="38049"/>
<dbReference type="FlyBase" id="FBgn0035124">
    <property type="gene designation" value="ttm2"/>
</dbReference>
<dbReference type="VEuPathDB" id="VectorBase:FBgn0035124"/>
<dbReference type="eggNOG" id="KOG2832">
    <property type="taxonomic scope" value="Eukaryota"/>
</dbReference>
<dbReference type="GeneTree" id="ENSGT01040000240503"/>
<dbReference type="HOGENOM" id="CLU_048293_0_0_1"/>
<dbReference type="InParanoid" id="Q9W0S3"/>
<dbReference type="OMA" id="QYYNQFE"/>
<dbReference type="OrthoDB" id="287041at2759"/>
<dbReference type="PhylomeDB" id="Q9W0S3"/>
<dbReference type="SignaLink" id="Q9W0S3"/>
<dbReference type="BioGRID-ORCS" id="38049">
    <property type="hits" value="0 hits in 1 CRISPR screen"/>
</dbReference>
<dbReference type="GenomeRNAi" id="38049"/>
<dbReference type="PRO" id="PR:Q9W0S3"/>
<dbReference type="Proteomes" id="UP000000803">
    <property type="component" value="Chromosome 3L"/>
</dbReference>
<dbReference type="Bgee" id="FBgn0035124">
    <property type="expression patterns" value="Expressed in early elongation stage spermatid (Drosophila) in testis and 19 other cell types or tissues"/>
</dbReference>
<dbReference type="GO" id="GO:0005743">
    <property type="term" value="C:mitochondrial inner membrane"/>
    <property type="evidence" value="ECO:0000250"/>
    <property type="project" value="UniProtKB"/>
</dbReference>
<dbReference type="GO" id="GO:0005739">
    <property type="term" value="C:mitochondrion"/>
    <property type="evidence" value="ECO:0000250"/>
    <property type="project" value="FlyBase"/>
</dbReference>
<dbReference type="GO" id="GO:0016607">
    <property type="term" value="C:nuclear speck"/>
    <property type="evidence" value="ECO:0000250"/>
    <property type="project" value="UniProtKB"/>
</dbReference>
<dbReference type="GO" id="GO:0005744">
    <property type="term" value="C:TIM23 mitochondrial import inner membrane translocase complex"/>
    <property type="evidence" value="ECO:0000250"/>
    <property type="project" value="UniProtKB"/>
</dbReference>
<dbReference type="GO" id="GO:0004722">
    <property type="term" value="F:protein serine/threonine phosphatase activity"/>
    <property type="evidence" value="ECO:0000250"/>
    <property type="project" value="UniProtKB"/>
</dbReference>
<dbReference type="GO" id="GO:0004725">
    <property type="term" value="F:protein tyrosine phosphatase activity"/>
    <property type="evidence" value="ECO:0000250"/>
    <property type="project" value="UniProtKB"/>
</dbReference>
<dbReference type="GO" id="GO:0043021">
    <property type="term" value="F:ribonucleoprotein complex binding"/>
    <property type="evidence" value="ECO:0000250"/>
    <property type="project" value="UniProtKB"/>
</dbReference>
<dbReference type="GO" id="GO:0007006">
    <property type="term" value="P:mitochondrial membrane organization"/>
    <property type="evidence" value="ECO:0000250"/>
    <property type="project" value="UniProtKB"/>
</dbReference>
<dbReference type="GO" id="GO:0007005">
    <property type="term" value="P:mitochondrion organization"/>
    <property type="evidence" value="ECO:0000250"/>
    <property type="project" value="FlyBase"/>
</dbReference>
<dbReference type="GO" id="GO:0006470">
    <property type="term" value="P:protein dephosphorylation"/>
    <property type="evidence" value="ECO:0000250"/>
    <property type="project" value="UniProtKB"/>
</dbReference>
<dbReference type="GO" id="GO:0030150">
    <property type="term" value="P:protein import into mitochondrial matrix"/>
    <property type="evidence" value="ECO:0000318"/>
    <property type="project" value="GO_Central"/>
</dbReference>
<dbReference type="CDD" id="cd07521">
    <property type="entry name" value="HAD_FCP1-like"/>
    <property type="match status" value="1"/>
</dbReference>
<dbReference type="FunFam" id="3.40.50.1000:FF:000019">
    <property type="entry name" value="Mitochondrial import inner membrane translocase subunit TIM50"/>
    <property type="match status" value="1"/>
</dbReference>
<dbReference type="Gene3D" id="3.40.50.1000">
    <property type="entry name" value="HAD superfamily/HAD-like"/>
    <property type="match status" value="1"/>
</dbReference>
<dbReference type="InterPro" id="IPR004274">
    <property type="entry name" value="FCP1_dom"/>
</dbReference>
<dbReference type="InterPro" id="IPR036412">
    <property type="entry name" value="HAD-like_sf"/>
</dbReference>
<dbReference type="InterPro" id="IPR023214">
    <property type="entry name" value="HAD_sf"/>
</dbReference>
<dbReference type="InterPro" id="IPR050365">
    <property type="entry name" value="TIM50"/>
</dbReference>
<dbReference type="PANTHER" id="PTHR12210">
    <property type="entry name" value="DULLARD PROTEIN PHOSPHATASE"/>
    <property type="match status" value="1"/>
</dbReference>
<dbReference type="Pfam" id="PF03031">
    <property type="entry name" value="NIF"/>
    <property type="match status" value="1"/>
</dbReference>
<dbReference type="SMART" id="SM00577">
    <property type="entry name" value="CPDc"/>
    <property type="match status" value="1"/>
</dbReference>
<dbReference type="SUPFAM" id="SSF56784">
    <property type="entry name" value="HAD-like"/>
    <property type="match status" value="1"/>
</dbReference>
<dbReference type="PROSITE" id="PS50969">
    <property type="entry name" value="FCP1"/>
    <property type="match status" value="1"/>
</dbReference>
<organism>
    <name type="scientific">Drosophila melanogaster</name>
    <name type="common">Fruit fly</name>
    <dbReference type="NCBI Taxonomy" id="7227"/>
    <lineage>
        <taxon>Eukaryota</taxon>
        <taxon>Metazoa</taxon>
        <taxon>Ecdysozoa</taxon>
        <taxon>Arthropoda</taxon>
        <taxon>Hexapoda</taxon>
        <taxon>Insecta</taxon>
        <taxon>Pterygota</taxon>
        <taxon>Neoptera</taxon>
        <taxon>Endopterygota</taxon>
        <taxon>Diptera</taxon>
        <taxon>Brachycera</taxon>
        <taxon>Muscomorpha</taxon>
        <taxon>Ephydroidea</taxon>
        <taxon>Drosophilidae</taxon>
        <taxon>Drosophila</taxon>
        <taxon>Sophophora</taxon>
    </lineage>
</organism>